<keyword id="KW-0119">Carbohydrate metabolism</keyword>
<keyword id="KW-0136">Cellulose degradation</keyword>
<keyword id="KW-0186">Copper</keyword>
<keyword id="KW-1015">Disulfide bond</keyword>
<keyword id="KW-0325">Glycoprotein</keyword>
<keyword id="KW-0479">Metal-binding</keyword>
<keyword id="KW-0503">Monooxygenase</keyword>
<keyword id="KW-0560">Oxidoreductase</keyword>
<keyword id="KW-0624">Polysaccharide degradation</keyword>
<keyword id="KW-1185">Reference proteome</keyword>
<keyword id="KW-0964">Secreted</keyword>
<keyword id="KW-0732">Signal</keyword>
<proteinExistence type="evidence at transcript level"/>
<accession>A0A384K4U6</accession>
<evidence type="ECO:0000250" key="1">
    <source>
        <dbReference type="UniProtKB" id="A0A384JJB6"/>
    </source>
</evidence>
<evidence type="ECO:0000250" key="2">
    <source>
        <dbReference type="UniProtKB" id="G2R6N0"/>
    </source>
</evidence>
<evidence type="ECO:0000250" key="3">
    <source>
        <dbReference type="UniProtKB" id="Q1K8B6"/>
    </source>
</evidence>
<evidence type="ECO:0000250" key="4">
    <source>
        <dbReference type="UniProtKB" id="Q4WP32"/>
    </source>
</evidence>
<evidence type="ECO:0000250" key="5">
    <source>
        <dbReference type="UniProtKB" id="Q7Z9M7"/>
    </source>
</evidence>
<evidence type="ECO:0000255" key="6"/>
<evidence type="ECO:0000255" key="7">
    <source>
        <dbReference type="PROSITE-ProRule" id="PRU00498"/>
    </source>
</evidence>
<evidence type="ECO:0000255" key="8">
    <source>
        <dbReference type="PROSITE-ProRule" id="PRU00597"/>
    </source>
</evidence>
<evidence type="ECO:0000269" key="9">
    <source>
    </source>
</evidence>
<evidence type="ECO:0000303" key="10">
    <source>
    </source>
</evidence>
<evidence type="ECO:0000305" key="11"/>
<evidence type="ECO:0000305" key="12">
    <source>
    </source>
</evidence>
<gene>
    <name evidence="10" type="primary">AA9A</name>
    <name type="ORF">BCIN_15g03140</name>
</gene>
<feature type="signal peptide" evidence="6">
    <location>
        <begin position="1"/>
        <end position="19"/>
    </location>
</feature>
<feature type="chain" id="PRO_5016921468" description="AA9 family lytic polysaccharide monooxygenase A" evidence="6">
    <location>
        <begin position="20"/>
        <end position="323"/>
    </location>
</feature>
<feature type="domain" description="CBM1" evidence="8">
    <location>
        <begin position="287"/>
        <end position="323"/>
    </location>
</feature>
<feature type="binding site" evidence="2">
    <location>
        <position position="20"/>
    </location>
    <ligand>
        <name>Cu(2+)</name>
        <dbReference type="ChEBI" id="CHEBI:29036"/>
    </ligand>
</feature>
<feature type="binding site" evidence="4">
    <location>
        <position position="90"/>
    </location>
    <ligand>
        <name>Cu(2+)</name>
        <dbReference type="ChEBI" id="CHEBI:29036"/>
    </ligand>
</feature>
<feature type="binding site" evidence="3">
    <location>
        <position position="161"/>
    </location>
    <ligand>
        <name>O2</name>
        <dbReference type="ChEBI" id="CHEBI:15379"/>
    </ligand>
</feature>
<feature type="binding site" evidence="3">
    <location>
        <position position="170"/>
    </location>
    <ligand>
        <name>O2</name>
        <dbReference type="ChEBI" id="CHEBI:15379"/>
    </ligand>
</feature>
<feature type="binding site" evidence="2">
    <location>
        <position position="172"/>
    </location>
    <ligand>
        <name>Cu(2+)</name>
        <dbReference type="ChEBI" id="CHEBI:29036"/>
    </ligand>
</feature>
<feature type="glycosylation site" description="N-linked (GlcNAc...) asparagine" evidence="7">
    <location>
        <position position="215"/>
    </location>
</feature>
<feature type="disulfide bond" evidence="5">
    <location>
        <begin position="59"/>
        <end position="175"/>
    </location>
</feature>
<protein>
    <recommendedName>
        <fullName evidence="10">AA9 family lytic polysaccharide monooxygenase A</fullName>
        <shortName evidence="10">AA9A</shortName>
        <ecNumber evidence="12">1.14.99.56</ecNumber>
    </recommendedName>
    <alternativeName>
        <fullName evidence="11">Endo-1,4-beta-glucanase AA9A</fullName>
        <shortName evidence="11">Endoglucanase AA9A</shortName>
    </alternativeName>
    <alternativeName>
        <fullName evidence="11">Glycosyl hydrolase 61 family protein AA9A</fullName>
    </alternativeName>
</protein>
<reference key="1">
    <citation type="journal article" date="2011" name="PLoS Genet.">
        <title>Genomic analysis of the necrotrophic fungal pathogens Sclerotinia sclerotiorum and Botrytis cinerea.</title>
        <authorList>
            <person name="Amselem J."/>
            <person name="Cuomo C.A."/>
            <person name="van Kan J.A.L."/>
            <person name="Viaud M."/>
            <person name="Benito E.P."/>
            <person name="Couloux A."/>
            <person name="Coutinho P.M."/>
            <person name="de Vries R.P."/>
            <person name="Dyer P.S."/>
            <person name="Fillinger S."/>
            <person name="Fournier E."/>
            <person name="Gout L."/>
            <person name="Hahn M."/>
            <person name="Kohn L."/>
            <person name="Lapalu N."/>
            <person name="Plummer K.M."/>
            <person name="Pradier J.-M."/>
            <person name="Quevillon E."/>
            <person name="Sharon A."/>
            <person name="Simon A."/>
            <person name="ten Have A."/>
            <person name="Tudzynski B."/>
            <person name="Tudzynski P."/>
            <person name="Wincker P."/>
            <person name="Andrew M."/>
            <person name="Anthouard V."/>
            <person name="Beever R.E."/>
            <person name="Beffa R."/>
            <person name="Benoit I."/>
            <person name="Bouzid O."/>
            <person name="Brault B."/>
            <person name="Chen Z."/>
            <person name="Choquer M."/>
            <person name="Collemare J."/>
            <person name="Cotton P."/>
            <person name="Danchin E.G."/>
            <person name="Da Silva C."/>
            <person name="Gautier A."/>
            <person name="Giraud C."/>
            <person name="Giraud T."/>
            <person name="Gonzalez C."/>
            <person name="Grossetete S."/>
            <person name="Gueldener U."/>
            <person name="Henrissat B."/>
            <person name="Howlett B.J."/>
            <person name="Kodira C."/>
            <person name="Kretschmer M."/>
            <person name="Lappartient A."/>
            <person name="Leroch M."/>
            <person name="Levis C."/>
            <person name="Mauceli E."/>
            <person name="Neuveglise C."/>
            <person name="Oeser B."/>
            <person name="Pearson M."/>
            <person name="Poulain J."/>
            <person name="Poussereau N."/>
            <person name="Quesneville H."/>
            <person name="Rascle C."/>
            <person name="Schumacher J."/>
            <person name="Segurens B."/>
            <person name="Sexton A."/>
            <person name="Silva E."/>
            <person name="Sirven C."/>
            <person name="Soanes D.M."/>
            <person name="Talbot N.J."/>
            <person name="Templeton M."/>
            <person name="Yandava C."/>
            <person name="Yarden O."/>
            <person name="Zeng Q."/>
            <person name="Rollins J.A."/>
            <person name="Lebrun M.-H."/>
            <person name="Dickman M."/>
        </authorList>
    </citation>
    <scope>NUCLEOTIDE SEQUENCE [LARGE SCALE GENOMIC DNA]</scope>
    <source>
        <strain>B05.10</strain>
    </source>
</reference>
<reference key="2">
    <citation type="journal article" date="2012" name="Eukaryot. Cell">
        <title>Genome update of Botrytis cinerea strains B05.10 and T4.</title>
        <authorList>
            <person name="Staats M."/>
            <person name="van Kan J.A.L."/>
        </authorList>
    </citation>
    <scope>NUCLEOTIDE SEQUENCE [LARGE SCALE GENOMIC DNA]</scope>
    <source>
        <strain>B05.10</strain>
    </source>
</reference>
<reference key="3">
    <citation type="journal article" date="2017" name="Mol. Plant Pathol.">
        <title>A gapless genome sequence of the fungus Botrytis cinerea.</title>
        <authorList>
            <person name="van Kan J.A.L."/>
            <person name="Stassen J.H.M."/>
            <person name="Mosbach A."/>
            <person name="van der Lee T.A.J."/>
            <person name="Faino L."/>
            <person name="Farmer A.D."/>
            <person name="Papasotiriou D.G."/>
            <person name="Zhou S."/>
            <person name="Seidl M.F."/>
            <person name="Cottam E."/>
            <person name="Edel D."/>
            <person name="Hahn M."/>
            <person name="Schwartz D.C."/>
            <person name="Dietrich R.A."/>
            <person name="Widdison S."/>
            <person name="Scalliet G."/>
        </authorList>
    </citation>
    <scope>NUCLEOTIDE SEQUENCE [LARGE SCALE GENOMIC DNA]</scope>
    <source>
        <strain>B05.10</strain>
    </source>
</reference>
<reference key="4">
    <citation type="journal article" date="2022" name="Microbiol. Spectr.">
        <title>The Linker Region Promotes Activity and Binding Efficiency of Modular LPMO towards Polymeric Substrate.</title>
        <authorList>
            <person name="Srivastava A."/>
            <person name="Nagar P."/>
            <person name="Rathore S."/>
            <person name="Adlakha N."/>
        </authorList>
    </citation>
    <scope>IDENTIFICATION</scope>
    <scope>INDUCTION</scope>
    <scope>FUNCTION</scope>
</reference>
<comment type="function">
    <text evidence="12">Lytic polysaccharide monooxygenase (LPMO) that depolymerizes crystalline and amorphous polysaccharides via the oxidation of scissile alpha- or beta-(1-4)-glycosidic bonds, yielding C1 and C4 oxidation products (Probable). Catalysis by LPMOs requires the reduction of the active-site copper from Cu(II) to Cu(I) by a reducing agent and H(2)O(2) or O(2) as a cosubstrate (Probable).</text>
</comment>
<comment type="catalytic activity">
    <reaction evidence="12">
        <text>[(1-&gt;4)-beta-D-glucosyl]n+m + reduced acceptor + O2 = 4-dehydro-beta-D-glucosyl-[(1-&gt;4)-beta-D-glucosyl]n-1 + [(1-&gt;4)-beta-D-glucosyl]m + acceptor + H2O.</text>
        <dbReference type="EC" id="1.14.99.56"/>
    </reaction>
</comment>
<comment type="cofactor">
    <cofactor evidence="12">
        <name>Cu(2+)</name>
        <dbReference type="ChEBI" id="CHEBI:29036"/>
    </cofactor>
    <text evidence="12">Binds 1 copper ion per subunit.</text>
</comment>
<comment type="subcellular location">
    <subcellularLocation>
        <location evidence="12">Secreted</location>
    </subcellularLocation>
</comment>
<comment type="induction">
    <text evidence="9">Expression is not induced in cellulose-inducible conditions (in Avicel- and wheat bran-containing complex medium).</text>
</comment>
<comment type="domain">
    <text evidence="1">Has a modular structure: an endo-beta-1,4-glucanase catalytic module at the N-terminus, a linker rich in serines and threonines, and a C-terminal carbohydrate-binding module (CBM). The genes for catalytic modules and CBMs seem to have evolved separately and have been linked by gene fusion.</text>
</comment>
<comment type="biotechnology">
    <text evidence="12">Lignocellulose is the most abundant polymeric composite on Earth and is a recalcitrant but promising renewable substrate for industrial biotechnology applications. Together with cellobiose dehydrogenases (CDHs) an enzymatic system capable of oxidative cellulose cleavage is formed, which increases the efficiency of cellulases and put LPMOs at focus of biofuel research.</text>
</comment>
<comment type="similarity">
    <text evidence="11">Belongs to the polysaccharide monooxygenase AA9 family.</text>
</comment>
<organism>
    <name type="scientific">Botryotinia fuckeliana (strain B05.10)</name>
    <name type="common">Noble rot fungus</name>
    <name type="synonym">Botrytis cinerea</name>
    <dbReference type="NCBI Taxonomy" id="332648"/>
    <lineage>
        <taxon>Eukaryota</taxon>
        <taxon>Fungi</taxon>
        <taxon>Dikarya</taxon>
        <taxon>Ascomycota</taxon>
        <taxon>Pezizomycotina</taxon>
        <taxon>Leotiomycetes</taxon>
        <taxon>Helotiales</taxon>
        <taxon>Sclerotiniaceae</taxon>
        <taxon>Botrytis</taxon>
    </lineage>
</organism>
<sequence length="323" mass="33705">MKSFISLLGLSFLTCHASAHYIFQSFTYKNIQYPPYGYIRVNDNYNSPVIDLASNDLRCNSGGETSKGTQTITVKAGDSFSFTGDIQVYHQGPLSIYMAKAPTTAAAFDGSGQVWFKILDIGPTFTNQVATWNLYQTYTYTIPPNLPNGDYLLRIQQLAIHNPYPGGIPQFYIECAQITVTNGGSGTPGPLVSIPGAFSDTDPGYTANIYSNFFNYTVPGPAVWASQGGSSAYTGISNGNNAATTLASMPAATGAATTATTIVTTTAAGSGSATKTGTSATATATGAVVQKFGQCGGQGWTGGTTCVAGSTCTATNAYYSQCL</sequence>
<dbReference type="EC" id="1.14.99.56" evidence="12"/>
<dbReference type="EMBL" id="CP009819">
    <property type="protein sequence ID" value="ATZ57781.1"/>
    <property type="molecule type" value="Genomic_DNA"/>
</dbReference>
<dbReference type="SMR" id="A0A384K4U6"/>
<dbReference type="EnsemblFungi" id="Bcin15g03140.1">
    <property type="protein sequence ID" value="Bcin15p03140.1"/>
    <property type="gene ID" value="Bcin15g03140"/>
</dbReference>
<dbReference type="VEuPathDB" id="FungiDB:Bcin15g03140"/>
<dbReference type="OrthoDB" id="6038816at2759"/>
<dbReference type="Proteomes" id="UP000001798">
    <property type="component" value="Chromosome bcin15"/>
</dbReference>
<dbReference type="GO" id="GO:0005576">
    <property type="term" value="C:extracellular region"/>
    <property type="evidence" value="ECO:0007669"/>
    <property type="project" value="UniProtKB-SubCell"/>
</dbReference>
<dbReference type="GO" id="GO:0030248">
    <property type="term" value="F:cellulose binding"/>
    <property type="evidence" value="ECO:0007669"/>
    <property type="project" value="InterPro"/>
</dbReference>
<dbReference type="GO" id="GO:0046872">
    <property type="term" value="F:metal ion binding"/>
    <property type="evidence" value="ECO:0007669"/>
    <property type="project" value="UniProtKB-KW"/>
</dbReference>
<dbReference type="GO" id="GO:0004497">
    <property type="term" value="F:monooxygenase activity"/>
    <property type="evidence" value="ECO:0007669"/>
    <property type="project" value="UniProtKB-KW"/>
</dbReference>
<dbReference type="GO" id="GO:0030245">
    <property type="term" value="P:cellulose catabolic process"/>
    <property type="evidence" value="ECO:0007669"/>
    <property type="project" value="UniProtKB-KW"/>
</dbReference>
<dbReference type="CDD" id="cd21175">
    <property type="entry name" value="LPMO_AA9"/>
    <property type="match status" value="1"/>
</dbReference>
<dbReference type="Gene3D" id="2.70.50.70">
    <property type="match status" value="1"/>
</dbReference>
<dbReference type="InterPro" id="IPR049892">
    <property type="entry name" value="AA9"/>
</dbReference>
<dbReference type="InterPro" id="IPR005103">
    <property type="entry name" value="AA9_LPMO"/>
</dbReference>
<dbReference type="InterPro" id="IPR035971">
    <property type="entry name" value="CBD_sf"/>
</dbReference>
<dbReference type="InterPro" id="IPR000254">
    <property type="entry name" value="Cellulose-bd_dom_fun"/>
</dbReference>
<dbReference type="PANTHER" id="PTHR33353:SF11">
    <property type="entry name" value="GLYCOSYLHYDROLASE FAMILY 61-7 PROTEIN"/>
    <property type="match status" value="1"/>
</dbReference>
<dbReference type="PANTHER" id="PTHR33353">
    <property type="entry name" value="PUTATIVE (AFU_ORTHOLOGUE AFUA_1G12560)-RELATED"/>
    <property type="match status" value="1"/>
</dbReference>
<dbReference type="Pfam" id="PF03443">
    <property type="entry name" value="AA9"/>
    <property type="match status" value="1"/>
</dbReference>
<dbReference type="Pfam" id="PF00734">
    <property type="entry name" value="CBM_1"/>
    <property type="match status" value="1"/>
</dbReference>
<dbReference type="SMART" id="SM00236">
    <property type="entry name" value="fCBD"/>
    <property type="match status" value="1"/>
</dbReference>
<dbReference type="SUPFAM" id="SSF57180">
    <property type="entry name" value="Cellulose-binding domain"/>
    <property type="match status" value="1"/>
</dbReference>
<dbReference type="PROSITE" id="PS00562">
    <property type="entry name" value="CBM1_1"/>
    <property type="match status" value="1"/>
</dbReference>
<dbReference type="PROSITE" id="PS51164">
    <property type="entry name" value="CBM1_2"/>
    <property type="match status" value="1"/>
</dbReference>
<name>LP9A_BOTFB</name>